<sequence length="317" mass="34320">METWQEVTVHVHRDAQEAVSHVLIETGSQGVAIADSADYIGQKDRFGELYPDVEQSDMIAITAYYPSSTNLADVIATINEQLAELASFGLQVGQVTVDSQELAEEDWADNWKKYYEPARITHDLTIVPSWTDYDASAGEKVIKLDPGMAFGTGTHPTTKMSLFALEQVLRGGETVIDVGTGSGVLSIASSLLGAKTIYAYDLDDVAVRVAQENIDLNQGTDNIHVAAGDLLKGVSQEADVIVANILADILVLLTDDAYRLVKKEGYLILSGIISEKLDMVLETAFSAGFFLETHMVQGEWNALVFKKTDDISGVIGG</sequence>
<accession>Q1JJU1</accession>
<reference key="1">
    <citation type="journal article" date="2006" name="Proc. Natl. Acad. Sci. U.S.A.">
        <title>Molecular genetic anatomy of inter- and intraserotype variation in the human bacterial pathogen group A Streptococcus.</title>
        <authorList>
            <person name="Beres S.B."/>
            <person name="Richter E.W."/>
            <person name="Nagiec M.J."/>
            <person name="Sumby P."/>
            <person name="Porcella S.F."/>
            <person name="DeLeo F.R."/>
            <person name="Musser J.M."/>
        </authorList>
    </citation>
    <scope>NUCLEOTIDE SEQUENCE [LARGE SCALE GENOMIC DNA]</scope>
    <source>
        <strain>MGAS9429</strain>
    </source>
</reference>
<protein>
    <recommendedName>
        <fullName evidence="1">Ribosomal protein L11 methyltransferase</fullName>
        <shortName evidence="1">L11 Mtase</shortName>
        <ecNumber evidence="1">2.1.1.-</ecNumber>
    </recommendedName>
</protein>
<evidence type="ECO:0000255" key="1">
    <source>
        <dbReference type="HAMAP-Rule" id="MF_00735"/>
    </source>
</evidence>
<name>PRMA_STRPC</name>
<gene>
    <name evidence="1" type="primary">prmA</name>
    <name type="ordered locus">MGAS9429_Spy1695</name>
</gene>
<dbReference type="EC" id="2.1.1.-" evidence="1"/>
<dbReference type="EMBL" id="CP000259">
    <property type="protein sequence ID" value="ABF32882.1"/>
    <property type="molecule type" value="Genomic_DNA"/>
</dbReference>
<dbReference type="RefSeq" id="WP_002987991.1">
    <property type="nucleotide sequence ID" value="NC_008021.1"/>
</dbReference>
<dbReference type="SMR" id="Q1JJU1"/>
<dbReference type="KEGG" id="spk:MGAS9429_Spy1695"/>
<dbReference type="HOGENOM" id="CLU_049382_0_1_9"/>
<dbReference type="Proteomes" id="UP000002433">
    <property type="component" value="Chromosome"/>
</dbReference>
<dbReference type="GO" id="GO:0005737">
    <property type="term" value="C:cytoplasm"/>
    <property type="evidence" value="ECO:0007669"/>
    <property type="project" value="UniProtKB-SubCell"/>
</dbReference>
<dbReference type="GO" id="GO:0016279">
    <property type="term" value="F:protein-lysine N-methyltransferase activity"/>
    <property type="evidence" value="ECO:0007669"/>
    <property type="project" value="RHEA"/>
</dbReference>
<dbReference type="GO" id="GO:0032259">
    <property type="term" value="P:methylation"/>
    <property type="evidence" value="ECO:0007669"/>
    <property type="project" value="UniProtKB-KW"/>
</dbReference>
<dbReference type="CDD" id="cd02440">
    <property type="entry name" value="AdoMet_MTases"/>
    <property type="match status" value="1"/>
</dbReference>
<dbReference type="Gene3D" id="3.40.50.150">
    <property type="entry name" value="Vaccinia Virus protein VP39"/>
    <property type="match status" value="1"/>
</dbReference>
<dbReference type="HAMAP" id="MF_00735">
    <property type="entry name" value="Methyltr_PrmA"/>
    <property type="match status" value="1"/>
</dbReference>
<dbReference type="InterPro" id="IPR050078">
    <property type="entry name" value="Ribosomal_L11_MeTrfase_PrmA"/>
</dbReference>
<dbReference type="InterPro" id="IPR004498">
    <property type="entry name" value="Ribosomal_PrmA_MeTrfase"/>
</dbReference>
<dbReference type="InterPro" id="IPR029063">
    <property type="entry name" value="SAM-dependent_MTases_sf"/>
</dbReference>
<dbReference type="NCBIfam" id="TIGR00406">
    <property type="entry name" value="prmA"/>
    <property type="match status" value="1"/>
</dbReference>
<dbReference type="PANTHER" id="PTHR43648">
    <property type="entry name" value="ELECTRON TRANSFER FLAVOPROTEIN BETA SUBUNIT LYSINE METHYLTRANSFERASE"/>
    <property type="match status" value="1"/>
</dbReference>
<dbReference type="PANTHER" id="PTHR43648:SF1">
    <property type="entry name" value="ELECTRON TRANSFER FLAVOPROTEIN BETA SUBUNIT LYSINE METHYLTRANSFERASE"/>
    <property type="match status" value="1"/>
</dbReference>
<dbReference type="Pfam" id="PF06325">
    <property type="entry name" value="PrmA"/>
    <property type="match status" value="1"/>
</dbReference>
<dbReference type="PIRSF" id="PIRSF000401">
    <property type="entry name" value="RPL11_MTase"/>
    <property type="match status" value="1"/>
</dbReference>
<dbReference type="SUPFAM" id="SSF53335">
    <property type="entry name" value="S-adenosyl-L-methionine-dependent methyltransferases"/>
    <property type="match status" value="1"/>
</dbReference>
<feature type="chain" id="PRO_1000046106" description="Ribosomal protein L11 methyltransferase">
    <location>
        <begin position="1"/>
        <end position="317"/>
    </location>
</feature>
<feature type="binding site" evidence="1">
    <location>
        <position position="158"/>
    </location>
    <ligand>
        <name>S-adenosyl-L-methionine</name>
        <dbReference type="ChEBI" id="CHEBI:59789"/>
    </ligand>
</feature>
<feature type="binding site" evidence="1">
    <location>
        <position position="179"/>
    </location>
    <ligand>
        <name>S-adenosyl-L-methionine</name>
        <dbReference type="ChEBI" id="CHEBI:59789"/>
    </ligand>
</feature>
<feature type="binding site" evidence="1">
    <location>
        <position position="201"/>
    </location>
    <ligand>
        <name>S-adenosyl-L-methionine</name>
        <dbReference type="ChEBI" id="CHEBI:59789"/>
    </ligand>
</feature>
<feature type="binding site" evidence="1">
    <location>
        <position position="244"/>
    </location>
    <ligand>
        <name>S-adenosyl-L-methionine</name>
        <dbReference type="ChEBI" id="CHEBI:59789"/>
    </ligand>
</feature>
<proteinExistence type="inferred from homology"/>
<comment type="function">
    <text evidence="1">Methylates ribosomal protein L11.</text>
</comment>
<comment type="catalytic activity">
    <reaction evidence="1">
        <text>L-lysyl-[protein] + 3 S-adenosyl-L-methionine = N(6),N(6),N(6)-trimethyl-L-lysyl-[protein] + 3 S-adenosyl-L-homocysteine + 3 H(+)</text>
        <dbReference type="Rhea" id="RHEA:54192"/>
        <dbReference type="Rhea" id="RHEA-COMP:9752"/>
        <dbReference type="Rhea" id="RHEA-COMP:13826"/>
        <dbReference type="ChEBI" id="CHEBI:15378"/>
        <dbReference type="ChEBI" id="CHEBI:29969"/>
        <dbReference type="ChEBI" id="CHEBI:57856"/>
        <dbReference type="ChEBI" id="CHEBI:59789"/>
        <dbReference type="ChEBI" id="CHEBI:61961"/>
    </reaction>
</comment>
<comment type="subcellular location">
    <subcellularLocation>
        <location evidence="1">Cytoplasm</location>
    </subcellularLocation>
</comment>
<comment type="similarity">
    <text evidence="1">Belongs to the methyltransferase superfamily. PrmA family.</text>
</comment>
<keyword id="KW-0963">Cytoplasm</keyword>
<keyword id="KW-0489">Methyltransferase</keyword>
<keyword id="KW-0949">S-adenosyl-L-methionine</keyword>
<keyword id="KW-0808">Transferase</keyword>
<organism>
    <name type="scientific">Streptococcus pyogenes serotype M12 (strain MGAS9429)</name>
    <dbReference type="NCBI Taxonomy" id="370551"/>
    <lineage>
        <taxon>Bacteria</taxon>
        <taxon>Bacillati</taxon>
        <taxon>Bacillota</taxon>
        <taxon>Bacilli</taxon>
        <taxon>Lactobacillales</taxon>
        <taxon>Streptococcaceae</taxon>
        <taxon>Streptococcus</taxon>
    </lineage>
</organism>